<proteinExistence type="inferred from homology"/>
<gene>
    <name type="primary">UL102</name>
</gene>
<comment type="function">
    <text evidence="1">Component of the helicase/primase complex. Unwinds the DNA at the replication forks and generates single-stranded DNA for both leading and lagging strand synthesis. The primase synthesizes short RNA primers on the lagging strand that the polymerase presumably elongates using dNTPs. The primase-associated factor has no known catalytic activity in the complex and may serve to facilitate the formation of the replisome by directly interacting with the origin-binding protein and the polymerase.</text>
</comment>
<comment type="subunit">
    <text evidence="1">Associates with the primase and the helicase to form the helicase-primase complex. Interacts with the origin-binding protein. Interacts with the polymerase catalytic subunit.</text>
</comment>
<comment type="subcellular location">
    <subcellularLocation>
        <location evidence="1">Host nucleus</location>
    </subcellularLocation>
</comment>
<comment type="similarity">
    <text evidence="1">Belongs to the herpesviridae HEPA family.</text>
</comment>
<feature type="chain" id="PRO_0000418266" description="DNA helicase/primase complex-associated protein">
    <location>
        <begin position="1"/>
        <end position="873"/>
    </location>
</feature>
<feature type="region of interest" description="Disordered" evidence="2">
    <location>
        <begin position="394"/>
        <end position="422"/>
    </location>
</feature>
<name>HEPA_HCMVM</name>
<evidence type="ECO:0000255" key="1">
    <source>
        <dbReference type="HAMAP-Rule" id="MF_04010"/>
    </source>
</evidence>
<evidence type="ECO:0000256" key="2">
    <source>
        <dbReference type="SAM" id="MobiDB-lite"/>
    </source>
</evidence>
<accession>F5HIG1</accession>
<protein>
    <recommendedName>
        <fullName evidence="1">DNA helicase/primase complex-associated protein</fullName>
        <shortName evidence="1">HEPA</shortName>
    </recommendedName>
    <alternativeName>
        <fullName evidence="1">Primase-associated factor</fullName>
    </alternativeName>
</protein>
<organism>
    <name type="scientific">Human cytomegalovirus (strain Merlin)</name>
    <name type="common">HHV-5</name>
    <name type="synonym">Human herpesvirus 5</name>
    <dbReference type="NCBI Taxonomy" id="295027"/>
    <lineage>
        <taxon>Viruses</taxon>
        <taxon>Duplodnaviria</taxon>
        <taxon>Heunggongvirae</taxon>
        <taxon>Peploviricota</taxon>
        <taxon>Herviviricetes</taxon>
        <taxon>Herpesvirales</taxon>
        <taxon>Orthoherpesviridae</taxon>
        <taxon>Betaherpesvirinae</taxon>
        <taxon>Cytomegalovirus</taxon>
        <taxon>Cytomegalovirus humanbeta5</taxon>
        <taxon>Human cytomegalovirus</taxon>
    </lineage>
</organism>
<organismHost>
    <name type="scientific">Homo sapiens</name>
    <name type="common">Human</name>
    <dbReference type="NCBI Taxonomy" id="9606"/>
</organismHost>
<reference key="1">
    <citation type="journal article" date="2004" name="J. Gen. Virol.">
        <title>Genetic content of wild-type human cytomegalovirus.</title>
        <authorList>
            <person name="Dolan A."/>
            <person name="Cunningham C."/>
            <person name="Hector R.D."/>
            <person name="Hassan-Walker A.F."/>
            <person name="Lee L."/>
            <person name="Addison C."/>
            <person name="Dargan D.J."/>
            <person name="McGeoch D.J."/>
            <person name="Gatherer D."/>
            <person name="Emery V.C."/>
            <person name="Griffiths P.D."/>
            <person name="Sinzger C."/>
            <person name="McSharry B.P."/>
            <person name="Wilkinson G.W.G."/>
            <person name="Davison A.J."/>
        </authorList>
    </citation>
    <scope>NUCLEOTIDE SEQUENCE [LARGE SCALE GENOMIC DNA]</scope>
</reference>
<keyword id="KW-0235">DNA replication</keyword>
<keyword id="KW-1048">Host nucleus</keyword>
<keyword id="KW-1185">Reference proteome</keyword>
<dbReference type="EMBL" id="AY446894">
    <property type="protein sequence ID" value="AAR31652.1"/>
    <property type="molecule type" value="Genomic_DNA"/>
</dbReference>
<dbReference type="RefSeq" id="YP_081548.1">
    <property type="nucleotide sequence ID" value="NC_006273.2"/>
</dbReference>
<dbReference type="GeneID" id="3077548"/>
<dbReference type="KEGG" id="vg:3077548"/>
<dbReference type="Reactome" id="R-HSA-9609690">
    <property type="pathway name" value="HCMV Early Events"/>
</dbReference>
<dbReference type="Reactome" id="R-HSA-9610379">
    <property type="pathway name" value="HCMV Late Events"/>
</dbReference>
<dbReference type="Proteomes" id="UP000000938">
    <property type="component" value="Segment"/>
</dbReference>
<dbReference type="GO" id="GO:0042025">
    <property type="term" value="C:host cell nucleus"/>
    <property type="evidence" value="ECO:0007669"/>
    <property type="project" value="UniProtKB-SubCell"/>
</dbReference>
<dbReference type="GO" id="GO:0006260">
    <property type="term" value="P:DNA replication"/>
    <property type="evidence" value="ECO:0007669"/>
    <property type="project" value="UniProtKB-KW"/>
</dbReference>
<dbReference type="GO" id="GO:0019079">
    <property type="term" value="P:viral genome replication"/>
    <property type="evidence" value="ECO:0007669"/>
    <property type="project" value="InterPro"/>
</dbReference>
<dbReference type="HAMAP" id="MF_04010">
    <property type="entry name" value="HSV_HEPA"/>
    <property type="match status" value="1"/>
</dbReference>
<dbReference type="InterPro" id="IPR004996">
    <property type="entry name" value="HSV_HEPA"/>
</dbReference>
<dbReference type="Pfam" id="PF03324">
    <property type="entry name" value="Herpes_HEPA"/>
    <property type="match status" value="1"/>
</dbReference>
<sequence length="873" mass="94080">MTAQPPLHHRHHPYTLFGTSCHLSWYGLLEASVPIVQCLFLDLGGGRAEPRLHTFVVRGDRLPPAEVRAVHRASYAALASAVTTDADERRRGLEQRSAVLARVLLEGSALIRVLARTFTPVQIQTDASGVEILEAAPALGVETTALSNALSLFHVAKLVVIGSYPEVHEPRVVTHAAERVSEEYGTHAHKKLRRGYYAYDLAMSFRVGTHKYVLERDDEAVLARLFEVREVCFLRTCLRLVTPVGFVAVAVTDEQCCLLLQSAWTHLYDVLFRGFAGQPPLRDYLGPDLFETGAARSFFFPGFPPVPVYAVHGLHTLMRETALDAAAEVLSWCGLPDIVGSAGKLEVEPCALSLGVPEDEWQVFGTEAGGGAVRLNATAFRERPAGGDRRWLLPPLPRDDGDGENNVVEVSSSTGGAHPPSDDATFTVHVRDATLHRVLIVDLVERVLAKCVRARDFNPYVRYSHRLHTYAVCEKFIENLRFRSRRAFWQIQSLLGYISEHVTSACASAGLLWVLSRGHREFYVYDGYSGHGPVSAEVCVRTVVDCYWRKLFGGDDPGPTCRVQESAPGVLLVWGDERLVGPFNFFYGNGGAGGSPLHGVVGGFAAGHCGGACCAGCVVTHRHSSGGGGSGVGDADHASGGGLDAAAGSGHNGGSDRVSPSTPPAALGGCCCAAGGDWLSAVGHVLGRLPALLRERVSVSELEAVYREILFRFVARRNDVDFWLLRFQPGENEVRPHAGVIDCAPFHGVWAEQGQIIVQSRDTALAADIGYGVYVDKAFAMLTACVEVWARELLSSSTASTTTCSSSSVLSSALPSVTSSSSGTATVSPPSCSSSSATWLEERDEWVRSLAVDAQHAAKRVASEGLRFFRLNA</sequence>